<proteinExistence type="inferred from homology"/>
<name>RL9_MESFL</name>
<comment type="function">
    <text evidence="1">Binds to the 23S rRNA.</text>
</comment>
<comment type="similarity">
    <text evidence="1">Belongs to the bacterial ribosomal protein bL9 family.</text>
</comment>
<gene>
    <name evidence="1" type="primary">rplI</name>
    <name type="ordered locus">Mfl083</name>
</gene>
<sequence length="147" mass="16756">MKVIFLQDVKGQGKKDEIKEISDGYARNFLIPKGLVKLATEGSVKTVKNRKIVQEQEKDLAIAETKQLKTLLEEIILKFKLQINEGKAFHSISNQDIVDQLKNSHKIDLDKRKFVNFKNLNQIGLHYIVIKLGFGIEAKLKVEIQGV</sequence>
<protein>
    <recommendedName>
        <fullName evidence="1">Large ribosomal subunit protein bL9</fullName>
    </recommendedName>
    <alternativeName>
        <fullName evidence="2">50S ribosomal protein L9</fullName>
    </alternativeName>
</protein>
<organism>
    <name type="scientific">Mesoplasma florum (strain ATCC 33453 / NBRC 100688 / NCTC 11704 / L1)</name>
    <name type="common">Acholeplasma florum</name>
    <dbReference type="NCBI Taxonomy" id="265311"/>
    <lineage>
        <taxon>Bacteria</taxon>
        <taxon>Bacillati</taxon>
        <taxon>Mycoplasmatota</taxon>
        <taxon>Mollicutes</taxon>
        <taxon>Entomoplasmatales</taxon>
        <taxon>Entomoplasmataceae</taxon>
        <taxon>Mesoplasma</taxon>
    </lineage>
</organism>
<evidence type="ECO:0000255" key="1">
    <source>
        <dbReference type="HAMAP-Rule" id="MF_00503"/>
    </source>
</evidence>
<evidence type="ECO:0000305" key="2"/>
<accession>Q6F234</accession>
<feature type="chain" id="PRO_0000236542" description="Large ribosomal subunit protein bL9">
    <location>
        <begin position="1"/>
        <end position="147"/>
    </location>
</feature>
<reference key="1">
    <citation type="submission" date="2004-06" db="EMBL/GenBank/DDBJ databases">
        <authorList>
            <person name="Birren B.W."/>
            <person name="Stange-Thomann N."/>
            <person name="Hafez N."/>
            <person name="DeCaprio D."/>
            <person name="Fisher S."/>
            <person name="Butler J."/>
            <person name="Elkins T."/>
            <person name="Kodira C.D."/>
            <person name="Major J."/>
            <person name="Wang S."/>
            <person name="Nicol R."/>
            <person name="Nusbaum C."/>
        </authorList>
    </citation>
    <scope>NUCLEOTIDE SEQUENCE [LARGE SCALE GENOMIC DNA]</scope>
    <source>
        <strain>ATCC 33453 / NBRC 100688 / NCTC 11704 / L1</strain>
    </source>
</reference>
<dbReference type="EMBL" id="AE017263">
    <property type="protein sequence ID" value="AAT75439.1"/>
    <property type="molecule type" value="Genomic_DNA"/>
</dbReference>
<dbReference type="RefSeq" id="WP_011182980.1">
    <property type="nucleotide sequence ID" value="NC_006055.1"/>
</dbReference>
<dbReference type="RefSeq" id="YP_053323.1">
    <property type="nucleotide sequence ID" value="NC_006055.1"/>
</dbReference>
<dbReference type="SMR" id="Q6F234"/>
<dbReference type="STRING" id="265311.Mfl083"/>
<dbReference type="PaxDb" id="265311-Mfl083"/>
<dbReference type="EnsemblBacteria" id="AAT75439">
    <property type="protein sequence ID" value="AAT75439"/>
    <property type="gene ID" value="Mfl083"/>
</dbReference>
<dbReference type="GeneID" id="2898236"/>
<dbReference type="KEGG" id="mfl:Mfl083"/>
<dbReference type="PATRIC" id="fig|265311.5.peg.84"/>
<dbReference type="eggNOG" id="COG0359">
    <property type="taxonomic scope" value="Bacteria"/>
</dbReference>
<dbReference type="HOGENOM" id="CLU_078938_3_0_14"/>
<dbReference type="OrthoDB" id="9788336at2"/>
<dbReference type="Proteomes" id="UP000006647">
    <property type="component" value="Chromosome"/>
</dbReference>
<dbReference type="GO" id="GO:1990904">
    <property type="term" value="C:ribonucleoprotein complex"/>
    <property type="evidence" value="ECO:0007669"/>
    <property type="project" value="UniProtKB-KW"/>
</dbReference>
<dbReference type="GO" id="GO:0005840">
    <property type="term" value="C:ribosome"/>
    <property type="evidence" value="ECO:0007669"/>
    <property type="project" value="UniProtKB-KW"/>
</dbReference>
<dbReference type="GO" id="GO:0019843">
    <property type="term" value="F:rRNA binding"/>
    <property type="evidence" value="ECO:0007669"/>
    <property type="project" value="UniProtKB-UniRule"/>
</dbReference>
<dbReference type="GO" id="GO:0003735">
    <property type="term" value="F:structural constituent of ribosome"/>
    <property type="evidence" value="ECO:0007669"/>
    <property type="project" value="InterPro"/>
</dbReference>
<dbReference type="GO" id="GO:0006412">
    <property type="term" value="P:translation"/>
    <property type="evidence" value="ECO:0007669"/>
    <property type="project" value="UniProtKB-UniRule"/>
</dbReference>
<dbReference type="Gene3D" id="3.10.430.100">
    <property type="entry name" value="Ribosomal protein L9, C-terminal domain"/>
    <property type="match status" value="1"/>
</dbReference>
<dbReference type="Gene3D" id="3.40.5.10">
    <property type="entry name" value="Ribosomal protein L9, N-terminal domain"/>
    <property type="match status" value="1"/>
</dbReference>
<dbReference type="HAMAP" id="MF_00503">
    <property type="entry name" value="Ribosomal_bL9"/>
    <property type="match status" value="1"/>
</dbReference>
<dbReference type="InterPro" id="IPR000244">
    <property type="entry name" value="Ribosomal_bL9"/>
</dbReference>
<dbReference type="InterPro" id="IPR009027">
    <property type="entry name" value="Ribosomal_bL9/RNase_H1_N"/>
</dbReference>
<dbReference type="InterPro" id="IPR020594">
    <property type="entry name" value="Ribosomal_bL9_bac/chp"/>
</dbReference>
<dbReference type="InterPro" id="IPR020069">
    <property type="entry name" value="Ribosomal_bL9_C"/>
</dbReference>
<dbReference type="InterPro" id="IPR036791">
    <property type="entry name" value="Ribosomal_bL9_C_sf"/>
</dbReference>
<dbReference type="InterPro" id="IPR020070">
    <property type="entry name" value="Ribosomal_bL9_N"/>
</dbReference>
<dbReference type="InterPro" id="IPR036935">
    <property type="entry name" value="Ribosomal_bL9_N_sf"/>
</dbReference>
<dbReference type="NCBIfam" id="TIGR00158">
    <property type="entry name" value="L9"/>
    <property type="match status" value="1"/>
</dbReference>
<dbReference type="PANTHER" id="PTHR21368">
    <property type="entry name" value="50S RIBOSOMAL PROTEIN L9"/>
    <property type="match status" value="1"/>
</dbReference>
<dbReference type="Pfam" id="PF03948">
    <property type="entry name" value="Ribosomal_L9_C"/>
    <property type="match status" value="1"/>
</dbReference>
<dbReference type="Pfam" id="PF01281">
    <property type="entry name" value="Ribosomal_L9_N"/>
    <property type="match status" value="1"/>
</dbReference>
<dbReference type="SUPFAM" id="SSF55658">
    <property type="entry name" value="L9 N-domain-like"/>
    <property type="match status" value="1"/>
</dbReference>
<dbReference type="SUPFAM" id="SSF55653">
    <property type="entry name" value="Ribosomal protein L9 C-domain"/>
    <property type="match status" value="1"/>
</dbReference>
<keyword id="KW-1185">Reference proteome</keyword>
<keyword id="KW-0687">Ribonucleoprotein</keyword>
<keyword id="KW-0689">Ribosomal protein</keyword>
<keyword id="KW-0694">RNA-binding</keyword>
<keyword id="KW-0699">rRNA-binding</keyword>